<gene>
    <name evidence="4" type="primary">Thsd7b</name>
</gene>
<accession>Q6P4U0</accession>
<keyword id="KW-1015">Disulfide bond</keyword>
<keyword id="KW-0325">Glycoprotein</keyword>
<keyword id="KW-0472">Membrane</keyword>
<keyword id="KW-1185">Reference proteome</keyword>
<keyword id="KW-0677">Repeat</keyword>
<keyword id="KW-0732">Signal</keyword>
<keyword id="KW-0812">Transmembrane</keyword>
<keyword id="KW-1133">Transmembrane helix</keyword>
<comment type="subcellular location">
    <subcellularLocation>
        <location evidence="3">Membrane</location>
        <topology evidence="3">Single-pass type I membrane protein</topology>
    </subcellularLocation>
</comment>
<name>THS7B_MOUSE</name>
<protein>
    <recommendedName>
        <fullName evidence="3">Thrombospondin type-1 domain-containing protein 7B</fullName>
    </recommendedName>
</protein>
<organism>
    <name type="scientific">Mus musculus</name>
    <name type="common">Mouse</name>
    <dbReference type="NCBI Taxonomy" id="10090"/>
    <lineage>
        <taxon>Eukaryota</taxon>
        <taxon>Metazoa</taxon>
        <taxon>Chordata</taxon>
        <taxon>Craniata</taxon>
        <taxon>Vertebrata</taxon>
        <taxon>Euteleostomi</taxon>
        <taxon>Mammalia</taxon>
        <taxon>Eutheria</taxon>
        <taxon>Euarchontoglires</taxon>
        <taxon>Glires</taxon>
        <taxon>Rodentia</taxon>
        <taxon>Myomorpha</taxon>
        <taxon>Muroidea</taxon>
        <taxon>Muridae</taxon>
        <taxon>Murinae</taxon>
        <taxon>Mus</taxon>
        <taxon>Mus</taxon>
    </lineage>
</organism>
<proteinExistence type="evidence at transcript level"/>
<evidence type="ECO:0000255" key="1"/>
<evidence type="ECO:0000255" key="2">
    <source>
        <dbReference type="PROSITE-ProRule" id="PRU00210"/>
    </source>
</evidence>
<evidence type="ECO:0000305" key="3"/>
<evidence type="ECO:0000312" key="4">
    <source>
        <dbReference type="MGI" id="MGI:2443925"/>
    </source>
</evidence>
<dbReference type="EMBL" id="BC063250">
    <property type="protein sequence ID" value="AAH63250.1"/>
    <property type="molecule type" value="mRNA"/>
</dbReference>
<dbReference type="CCDS" id="CCDS15255.1"/>
<dbReference type="RefSeq" id="NP_766073.2">
    <property type="nucleotide sequence ID" value="NM_172485.3"/>
</dbReference>
<dbReference type="SMR" id="Q6P4U0"/>
<dbReference type="FunCoup" id="Q6P4U0">
    <property type="interactions" value="843"/>
</dbReference>
<dbReference type="STRING" id="10090.ENSMUSP00000073220"/>
<dbReference type="GlyConnect" id="2768">
    <property type="glycosylation" value="3 N-Linked glycans (2 sites)"/>
</dbReference>
<dbReference type="GlyCosmos" id="Q6P4U0">
    <property type="glycosylation" value="14 sites, 3 glycans"/>
</dbReference>
<dbReference type="GlyGen" id="Q6P4U0">
    <property type="glycosylation" value="16 sites, 7 N-linked glycans (5 sites)"/>
</dbReference>
<dbReference type="iPTMnet" id="Q6P4U0"/>
<dbReference type="PhosphoSitePlus" id="Q6P4U0"/>
<dbReference type="SwissPalm" id="Q6P4U0"/>
<dbReference type="PaxDb" id="10090-ENSMUSP00000073220"/>
<dbReference type="ProteomicsDB" id="258875"/>
<dbReference type="Antibodypedia" id="62318">
    <property type="antibodies" value="9 antibodies from 5 providers"/>
</dbReference>
<dbReference type="DNASU" id="210417"/>
<dbReference type="Ensembl" id="ENSMUST00000073527.13">
    <property type="protein sequence ID" value="ENSMUSP00000073220.7"/>
    <property type="gene ID" value="ENSMUSG00000042581.15"/>
</dbReference>
<dbReference type="GeneID" id="210417"/>
<dbReference type="KEGG" id="mmu:210417"/>
<dbReference type="UCSC" id="uc007clv.2">
    <property type="organism name" value="mouse"/>
</dbReference>
<dbReference type="AGR" id="MGI:2443925"/>
<dbReference type="CTD" id="80731"/>
<dbReference type="MGI" id="MGI:2443925">
    <property type="gene designation" value="Thsd7b"/>
</dbReference>
<dbReference type="VEuPathDB" id="HostDB:ENSMUSG00000042581"/>
<dbReference type="eggNOG" id="KOG3538">
    <property type="taxonomic scope" value="Eukaryota"/>
</dbReference>
<dbReference type="GeneTree" id="ENSGT00940000159262"/>
<dbReference type="HOGENOM" id="CLU_004819_0_0_1"/>
<dbReference type="InParanoid" id="Q6P4U0"/>
<dbReference type="OMA" id="WGPCSEN"/>
<dbReference type="OrthoDB" id="5814848at2759"/>
<dbReference type="PhylomeDB" id="Q6P4U0"/>
<dbReference type="TreeFam" id="TF329791"/>
<dbReference type="Reactome" id="R-MMU-5173214">
    <property type="pathway name" value="O-glycosylation of TSR domain-containing proteins"/>
</dbReference>
<dbReference type="BioGRID-ORCS" id="210417">
    <property type="hits" value="2 hits in 77 CRISPR screens"/>
</dbReference>
<dbReference type="ChiTaRS" id="Thsd7b">
    <property type="organism name" value="mouse"/>
</dbReference>
<dbReference type="PRO" id="PR:Q6P4U0"/>
<dbReference type="Proteomes" id="UP000000589">
    <property type="component" value="Chromosome 1"/>
</dbReference>
<dbReference type="RNAct" id="Q6P4U0">
    <property type="molecule type" value="protein"/>
</dbReference>
<dbReference type="Bgee" id="ENSMUSG00000042581">
    <property type="expression patterns" value="Expressed in trigeminal ganglion and 129 other cell types or tissues"/>
</dbReference>
<dbReference type="ExpressionAtlas" id="Q6P4U0">
    <property type="expression patterns" value="baseline and differential"/>
</dbReference>
<dbReference type="GO" id="GO:0016020">
    <property type="term" value="C:membrane"/>
    <property type="evidence" value="ECO:0007669"/>
    <property type="project" value="UniProtKB-SubCell"/>
</dbReference>
<dbReference type="FunFam" id="2.20.100.10:FF:000014">
    <property type="entry name" value="Thrombospondin type 1 domain containing 7A"/>
    <property type="match status" value="2"/>
</dbReference>
<dbReference type="FunFam" id="2.20.100.10:FF:000017">
    <property type="entry name" value="Thrombospondin type 1 domain containing 7A"/>
    <property type="match status" value="1"/>
</dbReference>
<dbReference type="FunFam" id="2.20.100.10:FF:000018">
    <property type="entry name" value="Thrombospondin type 1 domain containing 7A"/>
    <property type="match status" value="1"/>
</dbReference>
<dbReference type="FunFam" id="2.20.100.10:FF:000020">
    <property type="entry name" value="Thrombospondin type 1 domain containing 7A"/>
    <property type="match status" value="1"/>
</dbReference>
<dbReference type="FunFam" id="2.20.100.10:FF:000027">
    <property type="entry name" value="Thrombospondin type 1 domain containing 7A"/>
    <property type="match status" value="1"/>
</dbReference>
<dbReference type="FunFam" id="2.20.100.10:FF:000031">
    <property type="entry name" value="Thrombospondin type 1 domain containing 7A"/>
    <property type="match status" value="1"/>
</dbReference>
<dbReference type="FunFam" id="2.20.100.10:FF:000050">
    <property type="entry name" value="Thrombospondin type 1 domain containing 7B"/>
    <property type="match status" value="1"/>
</dbReference>
<dbReference type="FunFam" id="2.20.100.10:FF:000062">
    <property type="entry name" value="Thrombospondin type 1 domain containing 7B"/>
    <property type="match status" value="1"/>
</dbReference>
<dbReference type="FunFam" id="2.20.100.10:FF:000063">
    <property type="entry name" value="Thrombospondin type 1 domain containing 7B"/>
    <property type="match status" value="1"/>
</dbReference>
<dbReference type="Gene3D" id="2.20.100.10">
    <property type="entry name" value="Thrombospondin type-1 (TSP1) repeat"/>
    <property type="match status" value="11"/>
</dbReference>
<dbReference type="InterPro" id="IPR051418">
    <property type="entry name" value="Spondin/Thrombospondin_T1"/>
</dbReference>
<dbReference type="InterPro" id="IPR000884">
    <property type="entry name" value="TSP1_rpt"/>
</dbReference>
<dbReference type="InterPro" id="IPR036383">
    <property type="entry name" value="TSP1_rpt_sf"/>
</dbReference>
<dbReference type="InterPro" id="IPR044004">
    <property type="entry name" value="TSP1_spondin_dom"/>
</dbReference>
<dbReference type="InterPro" id="IPR056991">
    <property type="entry name" value="TSP1_TSH7A-B_C"/>
</dbReference>
<dbReference type="PANTHER" id="PTHR11311">
    <property type="entry name" value="SPONDIN"/>
    <property type="match status" value="1"/>
</dbReference>
<dbReference type="PANTHER" id="PTHR11311:SF7">
    <property type="entry name" value="THROMBOSPONDIN TYPE-1 DOMAIN-CONTAINING PROTEIN 7B"/>
    <property type="match status" value="1"/>
</dbReference>
<dbReference type="Pfam" id="PF19030">
    <property type="entry name" value="TSP1_ADAMTS"/>
    <property type="match status" value="4"/>
</dbReference>
<dbReference type="Pfam" id="PF19028">
    <property type="entry name" value="TSP1_spondin"/>
    <property type="match status" value="7"/>
</dbReference>
<dbReference type="Pfam" id="PF23308">
    <property type="entry name" value="TSP1_TSH7A-B_C"/>
    <property type="match status" value="1"/>
</dbReference>
<dbReference type="Pfam" id="PF00090">
    <property type="entry name" value="TSP_1"/>
    <property type="match status" value="2"/>
</dbReference>
<dbReference type="SMART" id="SM00209">
    <property type="entry name" value="TSP1"/>
    <property type="match status" value="15"/>
</dbReference>
<dbReference type="SUPFAM" id="SSF82895">
    <property type="entry name" value="TSP-1 type 1 repeat"/>
    <property type="match status" value="13"/>
</dbReference>
<dbReference type="PROSITE" id="PS50092">
    <property type="entry name" value="TSP1"/>
    <property type="match status" value="13"/>
</dbReference>
<reference key="1">
    <citation type="journal article" date="2004" name="Genome Res.">
        <title>The status, quality, and expansion of the NIH full-length cDNA project: the Mammalian Gene Collection (MGC).</title>
        <authorList>
            <consortium name="The MGC Project Team"/>
        </authorList>
    </citation>
    <scope>NUCLEOTIDE SEQUENCE [LARGE SCALE MRNA]</scope>
    <source>
        <strain>C57BL/6J</strain>
        <tissue>Brain</tissue>
    </source>
</reference>
<sequence length="1607" mass="179309">MFLRSDLAVTHWVSRSMRKLFLVLSLLLSQAAHLEGRKDNQFLWKTGPWGRCAGDCGPGGAQSRAVWCFHIEGWTSPMSNCDESSQPPKERSCFRVCDWHSDLFQWEVSDWHRCLLVPGAQGEPRPRAVECVTAQHGLQHRTVRCLQKLNRTMVSNEICEHFAPQPPTEQACLIPCPRDCVVSEFSPWSTCPEGCGKKLQHRTRVAIAPPLYGGLQCPNLTESRACEAPVSCPLGKEEYSFSLKVGPWSKCRLPHLKEVDLSGRNIQDFSSDSNEQVTLTHQSYKAHHHSQPGDVVIGFQTRQVWCTRSDGRNALLSLCVRDSFPLTVQPCVMPKDCETSEWSPWSPCSKTCRSGTLSPGVRSRSRNVKHIAIGGGQECPELLEKETCIAEGEFLQPCPRYSWRTSEWKECQVSLLLEQHDPLWHETGPICGGGIQTREVYCAQSLPATIASRTKEVSRPVERTLCLGPAPSASQLCNVPCSMDCIVSSWSTWGPCVFENCHDPQGKKGFRMRQRHVLMESTGPMGRCPHLAESVPCEDPMCHRWLASEGICIADHGKCGLGHRILKAVCQNERGEEVSGGLCPVPPPPERMACEIPCRMDCVVSEWTVWSSCSQSCSNKNSDGKQTRSRSILALAGEGGKTCPSSQELQEYRLCNDHSCTQLYWETSAWGSCSENTLVTALNVTIGWNGEATCGVGIQTRKVFCIKSHVGQVMTKRCPESTRPETVRPCFLPCKKDCLVTAFSEWTPCPRPCQPGNTTIKQSRYRIIIQEAANGGQECPDTLFEERECEDISLCPSYRWKPQKWSSCILVPESIRQGRTGTSEACGKGLQTRAVSCISDDNQSAEMTECLKQMNGMPPLVQECTIPCRDDCTFTPWSKFTPCSKNCEATQIRRRQLTGKSRKKEKCQDASLYPLVEMEPCPCDTFMSHPYGNWSACILPEGKRDAQQGGLWVQGDDKECGEGVRFRAIACSNINGRPVDPSFCNSSGYIQEACVIPCPFDCKLSDWSSWGSCSSSCGIGVRIRSKWLKEKPYSGGRPCPKLDLKNQVHEAVPCYSECDQYSWVVEHWSPCKINNELRSPRCGRGTQSRRIRCVSTADREGGAVNRSLCNQDDAPQETQACSLLCPSECVMSEWGTWSRCPQSCDPHAMQRRTRHLLRPSLNSRTCGEDSQVRPCLLNENCFQFQYNLTEWSTCQLSENVSCGQGVRTRLLSCVRSDGKSVSMDHCEQRNLEKPQRMSIPCLVECVVNCQLSGWTTWTECSQTCGQGGRMSRTRFIIMPTQGEGRQCPTELTQQKPCPVTPCYSWVLGNWSACKLEGGDCGEGVQVRSFSCVVHNGSISHTAVPVEEALCGEVPFQEGILKQLCSVPCPGDCHITPWSEWSKCELTCIDGRSFETTGRQSRSRTFIIQSFENQDSCPQQVLETRPCTGGKCYHYIWKASLWNNNERTVWCQRSDGLNVTGGCSPQARPAAIRQCIPACKKPFSYCTQGGVCGCEKGYTEIMRSSGFLDYCMKVPGSEDKKADVKNLSGKNRPVNSKIHDIFKGWSLQPLDPDGRVKMWVYGVSGGSFLIMIFLVFTSYLVCKKPKPHQSTPRHQKPLTLAYDGDLDM</sequence>
<feature type="signal peptide" evidence="1">
    <location>
        <begin position="1"/>
        <end position="31"/>
    </location>
</feature>
<feature type="chain" id="PRO_0000260252" description="Thrombospondin type-1 domain-containing protein 7B">
    <location>
        <begin position="32"/>
        <end position="1607"/>
    </location>
</feature>
<feature type="topological domain" description="Extracellular" evidence="1">
    <location>
        <begin position="32"/>
        <end position="1556"/>
    </location>
</feature>
<feature type="transmembrane region" description="Helical" evidence="1">
    <location>
        <begin position="1557"/>
        <end position="1577"/>
    </location>
</feature>
<feature type="topological domain" description="Cytoplasmic" evidence="1">
    <location>
        <begin position="1578"/>
        <end position="1607"/>
    </location>
</feature>
<feature type="domain" description="TSP type-1 1" evidence="2">
    <location>
        <begin position="40"/>
        <end position="98"/>
    </location>
</feature>
<feature type="domain" description="TSP type-1 2" evidence="2">
    <location>
        <begin position="102"/>
        <end position="177"/>
    </location>
</feature>
<feature type="domain" description="TSP type-1 3" evidence="2">
    <location>
        <begin position="179"/>
        <end position="233"/>
    </location>
</feature>
<feature type="domain" description="TSP type-1 4" evidence="2">
    <location>
        <begin position="336"/>
        <end position="392"/>
    </location>
</feature>
<feature type="domain" description="TSP type-1 5" evidence="2">
    <location>
        <begin position="399"/>
        <end position="482"/>
    </location>
</feature>
<feature type="domain" description="TSP type-1 6" evidence="2">
    <location>
        <begin position="484"/>
        <end position="543"/>
    </location>
</feature>
<feature type="domain" description="TSP type-1 7" evidence="2">
    <location>
        <begin position="601"/>
        <end position="661"/>
    </location>
</feature>
<feature type="domain" description="TSP type-1 8" evidence="2">
    <location>
        <begin position="662"/>
        <end position="735"/>
    </location>
</feature>
<feature type="domain" description="TSP type-1 9" evidence="2">
    <location>
        <begin position="737"/>
        <end position="796"/>
    </location>
</feature>
<feature type="domain" description="TSP type-1 10" evidence="2">
    <location>
        <begin position="797"/>
        <end position="869"/>
    </location>
</feature>
<feature type="domain" description="TSP type-1 11" evidence="2">
    <location>
        <begin position="871"/>
        <end position="924"/>
    </location>
</feature>
<feature type="domain" description="TSP type-1 12" evidence="2">
    <location>
        <begin position="925"/>
        <end position="999"/>
    </location>
</feature>
<feature type="domain" description="TSP type-1 13" evidence="2">
    <location>
        <begin position="1001"/>
        <end position="1126"/>
    </location>
</feature>
<feature type="domain" description="TSP type-1 14" evidence="2">
    <location>
        <begin position="1128"/>
        <end position="1182"/>
    </location>
</feature>
<feature type="domain" description="TSP type-1 15" evidence="2">
    <location>
        <begin position="1183"/>
        <end position="1246"/>
    </location>
</feature>
<feature type="domain" description="TSP type-1 16" evidence="2">
    <location>
        <begin position="1248"/>
        <end position="1303"/>
    </location>
</feature>
<feature type="domain" description="TSP type-1 17" evidence="2">
    <location>
        <begin position="1304"/>
        <end position="1369"/>
    </location>
</feature>
<feature type="domain" description="TSP type-1 18" evidence="2">
    <location>
        <begin position="1371"/>
        <end position="1432"/>
    </location>
</feature>
<feature type="glycosylation site" description="N-linked (GlcNAc...) asparagine" evidence="1">
    <location>
        <position position="150"/>
    </location>
</feature>
<feature type="glycosylation site" description="N-linked (GlcNAc...) asparagine" evidence="1">
    <location>
        <position position="219"/>
    </location>
</feature>
<feature type="glycosylation site" description="N-linked (GlcNAc...) asparagine" evidence="1">
    <location>
        <position position="683"/>
    </location>
</feature>
<feature type="glycosylation site" description="N-linked (GlcNAc...) asparagine" evidence="1">
    <location>
        <position position="757"/>
    </location>
</feature>
<feature type="glycosylation site" description="N-linked (GlcNAc...) asparagine" evidence="1">
    <location>
        <position position="842"/>
    </location>
</feature>
<feature type="glycosylation site" description="N-linked (GlcNAc...) asparagine" evidence="1">
    <location>
        <position position="933"/>
    </location>
</feature>
<feature type="glycosylation site" description="N-linked (GlcNAc...) asparagine" evidence="1">
    <location>
        <position position="985"/>
    </location>
</feature>
<feature type="glycosylation site" description="N-linked (GlcNAc...) asparagine" evidence="1">
    <location>
        <position position="1105"/>
    </location>
</feature>
<feature type="glycosylation site" description="N-linked (GlcNAc...) asparagine" evidence="1">
    <location>
        <position position="1187"/>
    </location>
</feature>
<feature type="glycosylation site" description="N-linked (GlcNAc...) asparagine" evidence="1">
    <location>
        <position position="1199"/>
    </location>
</feature>
<feature type="glycosylation site" description="N-linked (GlcNAc...) asparagine" evidence="1">
    <location>
        <position position="1309"/>
    </location>
</feature>
<feature type="glycosylation site" description="N-linked (GlcNAc...) asparagine" evidence="1">
    <location>
        <position position="1335"/>
    </location>
</feature>
<feature type="glycosylation site" description="N-linked (GlcNAc...) asparagine" evidence="1">
    <location>
        <position position="1457"/>
    </location>
</feature>
<feature type="glycosylation site" description="N-linked (GlcNAc...) asparagine" evidence="1">
    <location>
        <position position="1525"/>
    </location>
</feature>
<feature type="disulfide bond" evidence="2">
    <location>
        <begin position="411"/>
        <end position="477"/>
    </location>
</feature>
<feature type="disulfide bond" evidence="2">
    <location>
        <begin position="431"/>
        <end position="481"/>
    </location>
</feature>
<feature type="disulfide bond" evidence="2">
    <location>
        <begin position="442"/>
        <end position="466"/>
    </location>
</feature>
<feature type="disulfide bond" evidence="2">
    <location>
        <begin position="602"/>
        <end position="643"/>
    </location>
</feature>
<feature type="disulfide bond" evidence="2">
    <location>
        <begin position="613"/>
        <end position="617"/>
    </location>
</feature>
<feature type="disulfide bond" evidence="2">
    <location>
        <begin position="655"/>
        <end position="660"/>
    </location>
</feature>
<feature type="disulfide bond" evidence="2">
    <location>
        <begin position="738"/>
        <end position="779"/>
    </location>
</feature>
<feature type="disulfide bond" evidence="2">
    <location>
        <begin position="749"/>
        <end position="753"/>
    </location>
</feature>
<feature type="disulfide bond" evidence="2">
    <location>
        <begin position="789"/>
        <end position="795"/>
    </location>
</feature>
<feature type="disulfide bond" evidence="2">
    <location>
        <begin position="937"/>
        <end position="994"/>
    </location>
</feature>
<feature type="disulfide bond" evidence="2">
    <location>
        <begin position="960"/>
        <end position="998"/>
    </location>
</feature>
<feature type="disulfide bond" evidence="2">
    <location>
        <begin position="971"/>
        <end position="984"/>
    </location>
</feature>
<feature type="disulfide bond" evidence="2">
    <location>
        <begin position="1002"/>
        <end position="1039"/>
    </location>
</feature>
<feature type="disulfide bond" evidence="2">
    <location>
        <begin position="1013"/>
        <end position="1017"/>
    </location>
</feature>
<feature type="disulfide bond" evidence="2">
    <location>
        <begin position="1121"/>
        <end position="1125"/>
    </location>
</feature>
<feature type="disulfide bond" evidence="2">
    <location>
        <begin position="1249"/>
        <end position="1287"/>
    </location>
</feature>
<feature type="disulfide bond" evidence="2">
    <location>
        <begin position="1260"/>
        <end position="1264"/>
    </location>
</feature>
<feature type="disulfide bond" evidence="2">
    <location>
        <begin position="1297"/>
        <end position="1302"/>
    </location>
</feature>
<feature type="disulfide bond" evidence="2">
    <location>
        <begin position="1372"/>
        <end position="1416"/>
    </location>
</feature>
<feature type="disulfide bond" evidence="2">
    <location>
        <begin position="1383"/>
        <end position="1387"/>
    </location>
</feature>
<feature type="disulfide bond" evidence="2">
    <location>
        <begin position="1426"/>
        <end position="1431"/>
    </location>
</feature>